<evidence type="ECO:0000255" key="1">
    <source>
        <dbReference type="HAMAP-Rule" id="MF_00463"/>
    </source>
</evidence>
<proteinExistence type="inferred from homology"/>
<keyword id="KW-0004">4Fe-4S</keyword>
<keyword id="KW-0997">Cell inner membrane</keyword>
<keyword id="KW-1003">Cell membrane</keyword>
<keyword id="KW-0249">Electron transport</keyword>
<keyword id="KW-0408">Iron</keyword>
<keyword id="KW-0411">Iron-sulfur</keyword>
<keyword id="KW-0472">Membrane</keyword>
<keyword id="KW-0479">Metal-binding</keyword>
<keyword id="KW-0677">Repeat</keyword>
<keyword id="KW-1278">Translocase</keyword>
<keyword id="KW-0813">Transport</keyword>
<gene>
    <name evidence="1" type="primary">rsxB</name>
    <name type="synonym">rnfB</name>
    <name type="ordered locus">SeAg_B1716</name>
</gene>
<name>RSXB_SALA4</name>
<dbReference type="EC" id="7.-.-.-" evidence="1"/>
<dbReference type="EMBL" id="CP001138">
    <property type="protein sequence ID" value="ACH51399.1"/>
    <property type="molecule type" value="Genomic_DNA"/>
</dbReference>
<dbReference type="RefSeq" id="WP_001092600.1">
    <property type="nucleotide sequence ID" value="NC_011149.1"/>
</dbReference>
<dbReference type="SMR" id="B5F6I9"/>
<dbReference type="KEGG" id="sea:SeAg_B1716"/>
<dbReference type="HOGENOM" id="CLU_063448_2_0_6"/>
<dbReference type="Proteomes" id="UP000008819">
    <property type="component" value="Chromosome"/>
</dbReference>
<dbReference type="GO" id="GO:0005886">
    <property type="term" value="C:plasma membrane"/>
    <property type="evidence" value="ECO:0007669"/>
    <property type="project" value="UniProtKB-SubCell"/>
</dbReference>
<dbReference type="GO" id="GO:0051539">
    <property type="term" value="F:4 iron, 4 sulfur cluster binding"/>
    <property type="evidence" value="ECO:0007669"/>
    <property type="project" value="UniProtKB-UniRule"/>
</dbReference>
<dbReference type="GO" id="GO:0009055">
    <property type="term" value="F:electron transfer activity"/>
    <property type="evidence" value="ECO:0007669"/>
    <property type="project" value="InterPro"/>
</dbReference>
<dbReference type="GO" id="GO:0046872">
    <property type="term" value="F:metal ion binding"/>
    <property type="evidence" value="ECO:0007669"/>
    <property type="project" value="UniProtKB-KW"/>
</dbReference>
<dbReference type="GO" id="GO:0022900">
    <property type="term" value="P:electron transport chain"/>
    <property type="evidence" value="ECO:0007669"/>
    <property type="project" value="UniProtKB-UniRule"/>
</dbReference>
<dbReference type="FunFam" id="1.10.15.40:FF:000001">
    <property type="entry name" value="Ion-translocating oxidoreductase complex subunit B"/>
    <property type="match status" value="1"/>
</dbReference>
<dbReference type="Gene3D" id="3.30.70.20">
    <property type="match status" value="1"/>
</dbReference>
<dbReference type="Gene3D" id="1.10.15.40">
    <property type="entry name" value="Electron transport complex subunit B, putative Fe-S cluster"/>
    <property type="match status" value="1"/>
</dbReference>
<dbReference type="HAMAP" id="MF_00463">
    <property type="entry name" value="RsxB_RnfB"/>
    <property type="match status" value="1"/>
</dbReference>
<dbReference type="InterPro" id="IPR007202">
    <property type="entry name" value="4Fe-4S_dom"/>
</dbReference>
<dbReference type="InterPro" id="IPR017896">
    <property type="entry name" value="4Fe4S_Fe-S-bd"/>
</dbReference>
<dbReference type="InterPro" id="IPR017900">
    <property type="entry name" value="4Fe4S_Fe_S_CS"/>
</dbReference>
<dbReference type="InterPro" id="IPR050395">
    <property type="entry name" value="4Fe4S_Ferredoxin_RnfB"/>
</dbReference>
<dbReference type="InterPro" id="IPR010207">
    <property type="entry name" value="Elect_transpt_cplx_RnfB/RsxB"/>
</dbReference>
<dbReference type="InterPro" id="IPR016463">
    <property type="entry name" value="RnfB/RsxB_Proteobac"/>
</dbReference>
<dbReference type="NCBIfam" id="NF003475">
    <property type="entry name" value="PRK05113.1"/>
    <property type="match status" value="1"/>
</dbReference>
<dbReference type="NCBIfam" id="TIGR01944">
    <property type="entry name" value="rnfB"/>
    <property type="match status" value="1"/>
</dbReference>
<dbReference type="PANTHER" id="PTHR43560">
    <property type="entry name" value="ION-TRANSLOCATING OXIDOREDUCTASE COMPLEX SUBUNIT B"/>
    <property type="match status" value="1"/>
</dbReference>
<dbReference type="PANTHER" id="PTHR43560:SF1">
    <property type="entry name" value="ION-TRANSLOCATING OXIDOREDUCTASE COMPLEX SUBUNIT B"/>
    <property type="match status" value="1"/>
</dbReference>
<dbReference type="Pfam" id="PF14697">
    <property type="entry name" value="Fer4_21"/>
    <property type="match status" value="1"/>
</dbReference>
<dbReference type="Pfam" id="PF04060">
    <property type="entry name" value="FeS"/>
    <property type="match status" value="1"/>
</dbReference>
<dbReference type="PIRSF" id="PIRSF005784">
    <property type="entry name" value="Elect_transpt_RnfB"/>
    <property type="match status" value="1"/>
</dbReference>
<dbReference type="SUPFAM" id="SSF54862">
    <property type="entry name" value="4Fe-4S ferredoxins"/>
    <property type="match status" value="1"/>
</dbReference>
<dbReference type="PROSITE" id="PS51656">
    <property type="entry name" value="4FE4S"/>
    <property type="match status" value="1"/>
</dbReference>
<dbReference type="PROSITE" id="PS00198">
    <property type="entry name" value="4FE4S_FER_1"/>
    <property type="match status" value="2"/>
</dbReference>
<dbReference type="PROSITE" id="PS51379">
    <property type="entry name" value="4FE4S_FER_2"/>
    <property type="match status" value="2"/>
</dbReference>
<feature type="chain" id="PRO_1000194491" description="Ion-translocating oxidoreductase complex subunit B">
    <location>
        <begin position="1"/>
        <end position="192"/>
    </location>
</feature>
<feature type="domain" description="4Fe-4S" evidence="1">
    <location>
        <begin position="32"/>
        <end position="91"/>
    </location>
</feature>
<feature type="domain" description="4Fe-4S ferredoxin-type 1" evidence="1">
    <location>
        <begin position="108"/>
        <end position="137"/>
    </location>
</feature>
<feature type="domain" description="4Fe-4S ferredoxin-type 2" evidence="1">
    <location>
        <begin position="138"/>
        <end position="167"/>
    </location>
</feature>
<feature type="region of interest" description="Hydrophobic" evidence="1">
    <location>
        <begin position="1"/>
        <end position="26"/>
    </location>
</feature>
<feature type="binding site" evidence="1">
    <location>
        <position position="49"/>
    </location>
    <ligand>
        <name>[4Fe-4S] cluster</name>
        <dbReference type="ChEBI" id="CHEBI:49883"/>
        <label>1</label>
    </ligand>
</feature>
<feature type="binding site" evidence="1">
    <location>
        <position position="52"/>
    </location>
    <ligand>
        <name>[4Fe-4S] cluster</name>
        <dbReference type="ChEBI" id="CHEBI:49883"/>
        <label>1</label>
    </ligand>
</feature>
<feature type="binding site" evidence="1">
    <location>
        <position position="57"/>
    </location>
    <ligand>
        <name>[4Fe-4S] cluster</name>
        <dbReference type="ChEBI" id="CHEBI:49883"/>
        <label>1</label>
    </ligand>
</feature>
<feature type="binding site" evidence="1">
    <location>
        <position position="74"/>
    </location>
    <ligand>
        <name>[4Fe-4S] cluster</name>
        <dbReference type="ChEBI" id="CHEBI:49883"/>
        <label>1</label>
    </ligand>
</feature>
<feature type="binding site" evidence="1">
    <location>
        <position position="117"/>
    </location>
    <ligand>
        <name>[4Fe-4S] cluster</name>
        <dbReference type="ChEBI" id="CHEBI:49883"/>
        <label>2</label>
    </ligand>
</feature>
<feature type="binding site" evidence="1">
    <location>
        <position position="120"/>
    </location>
    <ligand>
        <name>[4Fe-4S] cluster</name>
        <dbReference type="ChEBI" id="CHEBI:49883"/>
        <label>2</label>
    </ligand>
</feature>
<feature type="binding site" evidence="1">
    <location>
        <position position="123"/>
    </location>
    <ligand>
        <name>[4Fe-4S] cluster</name>
        <dbReference type="ChEBI" id="CHEBI:49883"/>
        <label>2</label>
    </ligand>
</feature>
<feature type="binding site" evidence="1">
    <location>
        <position position="127"/>
    </location>
    <ligand>
        <name>[4Fe-4S] cluster</name>
        <dbReference type="ChEBI" id="CHEBI:49883"/>
        <label>3</label>
    </ligand>
</feature>
<feature type="binding site" evidence="1">
    <location>
        <position position="147"/>
    </location>
    <ligand>
        <name>[4Fe-4S] cluster</name>
        <dbReference type="ChEBI" id="CHEBI:49883"/>
        <label>3</label>
    </ligand>
</feature>
<feature type="binding site" evidence="1">
    <location>
        <position position="150"/>
    </location>
    <ligand>
        <name>[4Fe-4S] cluster</name>
        <dbReference type="ChEBI" id="CHEBI:49883"/>
        <label>3</label>
    </ligand>
</feature>
<feature type="binding site" evidence="1">
    <location>
        <position position="153"/>
    </location>
    <ligand>
        <name>[4Fe-4S] cluster</name>
        <dbReference type="ChEBI" id="CHEBI:49883"/>
        <label>3</label>
    </ligand>
</feature>
<feature type="binding site" evidence="1">
    <location>
        <position position="157"/>
    </location>
    <ligand>
        <name>[4Fe-4S] cluster</name>
        <dbReference type="ChEBI" id="CHEBI:49883"/>
        <label>2</label>
    </ligand>
</feature>
<comment type="function">
    <text evidence="1">Part of a membrane-bound complex that couples electron transfer with translocation of ions across the membrane. Required to maintain the reduced state of SoxR.</text>
</comment>
<comment type="cofactor">
    <cofactor evidence="1">
        <name>[4Fe-4S] cluster</name>
        <dbReference type="ChEBI" id="CHEBI:49883"/>
    </cofactor>
    <text evidence="1">Binds 3 [4Fe-4S] clusters.</text>
</comment>
<comment type="subunit">
    <text evidence="1">The complex is composed of six subunits: RsxA, RsxB, RsxC, RsxD, RsxE and RsxG.</text>
</comment>
<comment type="subcellular location">
    <subcellularLocation>
        <location evidence="1">Cell inner membrane</location>
    </subcellularLocation>
</comment>
<comment type="similarity">
    <text evidence="1">Belongs to the 4Fe4S bacterial-type ferredoxin family. RnfB subfamily.</text>
</comment>
<accession>B5F6I9</accession>
<sequence length="192" mass="20677">MNTIWIAVGALTLLGLVFGAILGYASRRFAVEDDPVVEKIDAILPQSQCGQCGYPGCRPYAEAVGLQGEKINRCAPGGEAVMLKMAELLNVEPQPCDGEEQQAAPVRMLAVIDENNCIGCTKCIQACPVDAIVGATRAMHTVMSDLCTGCNLCVDPCPTHCIELRPVNETPDSWKWDLNTIPVRIIPVEQHA</sequence>
<reference key="1">
    <citation type="journal article" date="2011" name="J. Bacteriol.">
        <title>Comparative genomics of 28 Salmonella enterica isolates: evidence for CRISPR-mediated adaptive sublineage evolution.</title>
        <authorList>
            <person name="Fricke W.F."/>
            <person name="Mammel M.K."/>
            <person name="McDermott P.F."/>
            <person name="Tartera C."/>
            <person name="White D.G."/>
            <person name="Leclerc J.E."/>
            <person name="Ravel J."/>
            <person name="Cebula T.A."/>
        </authorList>
    </citation>
    <scope>NUCLEOTIDE SEQUENCE [LARGE SCALE GENOMIC DNA]</scope>
    <source>
        <strain>SL483</strain>
    </source>
</reference>
<protein>
    <recommendedName>
        <fullName evidence="1">Ion-translocating oxidoreductase complex subunit B</fullName>
        <ecNumber evidence="1">7.-.-.-</ecNumber>
    </recommendedName>
    <alternativeName>
        <fullName evidence="1">Rsx electron transport complex subunit B</fullName>
    </alternativeName>
</protein>
<organism>
    <name type="scientific">Salmonella agona (strain SL483)</name>
    <dbReference type="NCBI Taxonomy" id="454166"/>
    <lineage>
        <taxon>Bacteria</taxon>
        <taxon>Pseudomonadati</taxon>
        <taxon>Pseudomonadota</taxon>
        <taxon>Gammaproteobacteria</taxon>
        <taxon>Enterobacterales</taxon>
        <taxon>Enterobacteriaceae</taxon>
        <taxon>Salmonella</taxon>
    </lineage>
</organism>